<gene>
    <name evidence="1" type="primary">dnaA</name>
    <name type="ordered locus">BDU_434</name>
</gene>
<sequence>MQEGKNIWSLILAAIRKELSEEEFYIWFENLYFIDAIGENIKIATPNSFHKNQVEKRFSKRIKEILIEKGHSTINVEFIHSQNELKDHNTESKDISLKAITHQQDLQTKNKDIKTHAKNIINNTKQYSIKEEIHIKYRNPFLKKKYTFENFIIGTNNKLAYNASLSIAKNPGKKYNPCLIYGGVGLGKTHLLQSIGNKTEELHKEFKILYVTAENFLNEFVESIKTNETKRFKKKYRHLDMLLLDDIHDLQKKEGIQEELFHTFNALYEDNKQMVFTCDRQPSELVNFTDRLKSRFTRGLNVDISKPNFELRVAIIEKKAEEDGIKVPKNILNLVAKKVTTNIRDLEAAVTKLKAHIDLEDIEIDTNIVDKIIKEIIAYENDNTNTPNKINIENIKKVILRELKLTNKDIEGNSKKPEITKARHIYAYLLRNFTELSTIEIGKIIGGKTHSTVLYSINKIDKDRNKNLEINNLIIELMNKINKN</sequence>
<proteinExistence type="inferred from homology"/>
<feature type="chain" id="PRO_1000121951" description="Chromosomal replication initiator protein DnaA">
    <location>
        <begin position="1"/>
        <end position="484"/>
    </location>
</feature>
<feature type="region of interest" description="Domain I, interacts with DnaA modulators" evidence="1">
    <location>
        <begin position="1"/>
        <end position="73"/>
    </location>
</feature>
<feature type="region of interest" description="Domain II" evidence="1">
    <location>
        <begin position="73"/>
        <end position="140"/>
    </location>
</feature>
<feature type="region of interest" description="Domain III, AAA+ region" evidence="1">
    <location>
        <begin position="141"/>
        <end position="357"/>
    </location>
</feature>
<feature type="region of interest" description="Domain IV, binds dsDNA" evidence="1">
    <location>
        <begin position="358"/>
        <end position="484"/>
    </location>
</feature>
<feature type="binding site" evidence="1">
    <location>
        <position position="185"/>
    </location>
    <ligand>
        <name>ATP</name>
        <dbReference type="ChEBI" id="CHEBI:30616"/>
    </ligand>
</feature>
<feature type="binding site" evidence="1">
    <location>
        <position position="187"/>
    </location>
    <ligand>
        <name>ATP</name>
        <dbReference type="ChEBI" id="CHEBI:30616"/>
    </ligand>
</feature>
<feature type="binding site" evidence="1">
    <location>
        <position position="188"/>
    </location>
    <ligand>
        <name>ATP</name>
        <dbReference type="ChEBI" id="CHEBI:30616"/>
    </ligand>
</feature>
<feature type="binding site" evidence="1">
    <location>
        <position position="189"/>
    </location>
    <ligand>
        <name>ATP</name>
        <dbReference type="ChEBI" id="CHEBI:30616"/>
    </ligand>
</feature>
<comment type="function">
    <text evidence="1">Plays an essential role in the initiation and regulation of chromosomal replication. ATP-DnaA binds to the origin of replication (oriC) to initiate formation of the DNA replication initiation complex once per cell cycle. Binds the DnaA box (a 9 base pair repeat at the origin) and separates the double-stranded (ds)DNA. Forms a right-handed helical filament on oriC DNA; dsDNA binds to the exterior of the filament while single-stranded (ss)DNA is stabiized in the filament's interior. The ATP-DnaA-oriC complex binds and stabilizes one strand of the AT-rich DNA unwinding element (DUE), permitting loading of DNA polymerase. After initiation quickly degrades to an ADP-DnaA complex that is not apt for DNA replication. Binds acidic phospholipids.</text>
</comment>
<comment type="subunit">
    <text evidence="1">Oligomerizes as a right-handed, spiral filament on DNA at oriC.</text>
</comment>
<comment type="subcellular location">
    <subcellularLocation>
        <location evidence="1">Cytoplasm</location>
    </subcellularLocation>
</comment>
<comment type="domain">
    <text evidence="1">Domain I is involved in oligomerization and binding regulators, domain II is flexibile and of varying length in different bacteria, domain III forms the AAA+ region, while domain IV binds dsDNA.</text>
</comment>
<comment type="similarity">
    <text evidence="1">Belongs to the DnaA family.</text>
</comment>
<evidence type="ECO:0000255" key="1">
    <source>
        <dbReference type="HAMAP-Rule" id="MF_00377"/>
    </source>
</evidence>
<dbReference type="EMBL" id="CP000976">
    <property type="protein sequence ID" value="ACH93379.1"/>
    <property type="molecule type" value="Genomic_DNA"/>
</dbReference>
<dbReference type="RefSeq" id="WP_012538190.1">
    <property type="nucleotide sequence ID" value="NC_011229.1"/>
</dbReference>
<dbReference type="SMR" id="B5RLZ3"/>
<dbReference type="STRING" id="412419.BDU_434"/>
<dbReference type="KEGG" id="bdu:BDU_434"/>
<dbReference type="eggNOG" id="COG0593">
    <property type="taxonomic scope" value="Bacteria"/>
</dbReference>
<dbReference type="HOGENOM" id="CLU_026910_3_2_12"/>
<dbReference type="OrthoDB" id="9807019at2"/>
<dbReference type="Proteomes" id="UP000000611">
    <property type="component" value="Chromosome"/>
</dbReference>
<dbReference type="GO" id="GO:0005737">
    <property type="term" value="C:cytoplasm"/>
    <property type="evidence" value="ECO:0007669"/>
    <property type="project" value="UniProtKB-SubCell"/>
</dbReference>
<dbReference type="GO" id="GO:0005886">
    <property type="term" value="C:plasma membrane"/>
    <property type="evidence" value="ECO:0007669"/>
    <property type="project" value="TreeGrafter"/>
</dbReference>
<dbReference type="GO" id="GO:0005524">
    <property type="term" value="F:ATP binding"/>
    <property type="evidence" value="ECO:0007669"/>
    <property type="project" value="UniProtKB-UniRule"/>
</dbReference>
<dbReference type="GO" id="GO:0016887">
    <property type="term" value="F:ATP hydrolysis activity"/>
    <property type="evidence" value="ECO:0007669"/>
    <property type="project" value="InterPro"/>
</dbReference>
<dbReference type="GO" id="GO:0003688">
    <property type="term" value="F:DNA replication origin binding"/>
    <property type="evidence" value="ECO:0007669"/>
    <property type="project" value="UniProtKB-UniRule"/>
</dbReference>
<dbReference type="GO" id="GO:0008289">
    <property type="term" value="F:lipid binding"/>
    <property type="evidence" value="ECO:0007669"/>
    <property type="project" value="UniProtKB-KW"/>
</dbReference>
<dbReference type="GO" id="GO:0006270">
    <property type="term" value="P:DNA replication initiation"/>
    <property type="evidence" value="ECO:0007669"/>
    <property type="project" value="UniProtKB-UniRule"/>
</dbReference>
<dbReference type="GO" id="GO:0006275">
    <property type="term" value="P:regulation of DNA replication"/>
    <property type="evidence" value="ECO:0007669"/>
    <property type="project" value="UniProtKB-UniRule"/>
</dbReference>
<dbReference type="CDD" id="cd00009">
    <property type="entry name" value="AAA"/>
    <property type="match status" value="1"/>
</dbReference>
<dbReference type="CDD" id="cd06571">
    <property type="entry name" value="Bac_DnaA_C"/>
    <property type="match status" value="1"/>
</dbReference>
<dbReference type="FunFam" id="3.40.50.300:FF:000668">
    <property type="entry name" value="Chromosomal replication initiator protein DnaA"/>
    <property type="match status" value="1"/>
</dbReference>
<dbReference type="Gene3D" id="1.10.1750.10">
    <property type="match status" value="1"/>
</dbReference>
<dbReference type="Gene3D" id="1.10.8.60">
    <property type="match status" value="1"/>
</dbReference>
<dbReference type="Gene3D" id="3.30.300.180">
    <property type="match status" value="1"/>
</dbReference>
<dbReference type="Gene3D" id="3.40.50.300">
    <property type="entry name" value="P-loop containing nucleotide triphosphate hydrolases"/>
    <property type="match status" value="1"/>
</dbReference>
<dbReference type="HAMAP" id="MF_00377">
    <property type="entry name" value="DnaA_bact"/>
    <property type="match status" value="1"/>
</dbReference>
<dbReference type="InterPro" id="IPR003593">
    <property type="entry name" value="AAA+_ATPase"/>
</dbReference>
<dbReference type="InterPro" id="IPR001957">
    <property type="entry name" value="Chromosome_initiator_DnaA"/>
</dbReference>
<dbReference type="InterPro" id="IPR020591">
    <property type="entry name" value="Chromosome_initiator_DnaA-like"/>
</dbReference>
<dbReference type="InterPro" id="IPR018312">
    <property type="entry name" value="Chromosome_initiator_DnaA_CS"/>
</dbReference>
<dbReference type="InterPro" id="IPR013159">
    <property type="entry name" value="DnaA_C"/>
</dbReference>
<dbReference type="InterPro" id="IPR013317">
    <property type="entry name" value="DnaA_dom"/>
</dbReference>
<dbReference type="InterPro" id="IPR024633">
    <property type="entry name" value="DnaA_N_dom"/>
</dbReference>
<dbReference type="InterPro" id="IPR038454">
    <property type="entry name" value="DnaA_N_sf"/>
</dbReference>
<dbReference type="InterPro" id="IPR027417">
    <property type="entry name" value="P-loop_NTPase"/>
</dbReference>
<dbReference type="InterPro" id="IPR010921">
    <property type="entry name" value="Trp_repressor/repl_initiator"/>
</dbReference>
<dbReference type="NCBIfam" id="TIGR00362">
    <property type="entry name" value="DnaA"/>
    <property type="match status" value="1"/>
</dbReference>
<dbReference type="PANTHER" id="PTHR30050">
    <property type="entry name" value="CHROMOSOMAL REPLICATION INITIATOR PROTEIN DNAA"/>
    <property type="match status" value="1"/>
</dbReference>
<dbReference type="PANTHER" id="PTHR30050:SF2">
    <property type="entry name" value="CHROMOSOMAL REPLICATION INITIATOR PROTEIN DNAA"/>
    <property type="match status" value="1"/>
</dbReference>
<dbReference type="Pfam" id="PF00308">
    <property type="entry name" value="Bac_DnaA"/>
    <property type="match status" value="1"/>
</dbReference>
<dbReference type="Pfam" id="PF08299">
    <property type="entry name" value="Bac_DnaA_C"/>
    <property type="match status" value="1"/>
</dbReference>
<dbReference type="Pfam" id="PF11638">
    <property type="entry name" value="DnaA_N"/>
    <property type="match status" value="1"/>
</dbReference>
<dbReference type="PRINTS" id="PR00051">
    <property type="entry name" value="DNAA"/>
</dbReference>
<dbReference type="SMART" id="SM00382">
    <property type="entry name" value="AAA"/>
    <property type="match status" value="1"/>
</dbReference>
<dbReference type="SMART" id="SM00760">
    <property type="entry name" value="Bac_DnaA_C"/>
    <property type="match status" value="1"/>
</dbReference>
<dbReference type="SUPFAM" id="SSF52540">
    <property type="entry name" value="P-loop containing nucleoside triphosphate hydrolases"/>
    <property type="match status" value="1"/>
</dbReference>
<dbReference type="SUPFAM" id="SSF48295">
    <property type="entry name" value="TrpR-like"/>
    <property type="match status" value="1"/>
</dbReference>
<dbReference type="PROSITE" id="PS01008">
    <property type="entry name" value="DNAA"/>
    <property type="match status" value="1"/>
</dbReference>
<name>DNAA_BORDL</name>
<reference key="1">
    <citation type="journal article" date="2008" name="PLoS Genet.">
        <title>The genome of Borrelia recurrentis, the agent of deadly louse-borne relapsing fever, is a degraded subset of tick-borne Borrelia duttonii.</title>
        <authorList>
            <person name="Lescot M."/>
            <person name="Audic S."/>
            <person name="Robert C."/>
            <person name="Nguyen T.T."/>
            <person name="Blanc G."/>
            <person name="Cutler S.J."/>
            <person name="Wincker P."/>
            <person name="Couloux A."/>
            <person name="Claverie J.-M."/>
            <person name="Raoult D."/>
            <person name="Drancourt M."/>
        </authorList>
    </citation>
    <scope>NUCLEOTIDE SEQUENCE [LARGE SCALE GENOMIC DNA]</scope>
    <source>
        <strain>Ly</strain>
    </source>
</reference>
<organism>
    <name type="scientific">Borrelia duttonii (strain Ly)</name>
    <dbReference type="NCBI Taxonomy" id="412419"/>
    <lineage>
        <taxon>Bacteria</taxon>
        <taxon>Pseudomonadati</taxon>
        <taxon>Spirochaetota</taxon>
        <taxon>Spirochaetia</taxon>
        <taxon>Spirochaetales</taxon>
        <taxon>Borreliaceae</taxon>
        <taxon>Borrelia</taxon>
    </lineage>
</organism>
<accession>B5RLZ3</accession>
<keyword id="KW-0067">ATP-binding</keyword>
<keyword id="KW-0963">Cytoplasm</keyword>
<keyword id="KW-0235">DNA replication</keyword>
<keyword id="KW-0238">DNA-binding</keyword>
<keyword id="KW-0446">Lipid-binding</keyword>
<keyword id="KW-0547">Nucleotide-binding</keyword>
<protein>
    <recommendedName>
        <fullName evidence="1">Chromosomal replication initiator protein DnaA</fullName>
    </recommendedName>
</protein>